<feature type="chain" id="PRO_0000381501" description="Biotin synthase">
    <location>
        <begin position="1"/>
        <end position="337"/>
    </location>
</feature>
<feature type="domain" description="Radical SAM core" evidence="2">
    <location>
        <begin position="62"/>
        <end position="289"/>
    </location>
</feature>
<feature type="binding site" evidence="1">
    <location>
        <position position="77"/>
    </location>
    <ligand>
        <name>[4Fe-4S] cluster</name>
        <dbReference type="ChEBI" id="CHEBI:49883"/>
        <note>4Fe-4S-S-AdoMet</note>
    </ligand>
</feature>
<feature type="binding site" evidence="1">
    <location>
        <position position="81"/>
    </location>
    <ligand>
        <name>[4Fe-4S] cluster</name>
        <dbReference type="ChEBI" id="CHEBI:49883"/>
        <note>4Fe-4S-S-AdoMet</note>
    </ligand>
</feature>
<feature type="binding site" evidence="1">
    <location>
        <position position="84"/>
    </location>
    <ligand>
        <name>[4Fe-4S] cluster</name>
        <dbReference type="ChEBI" id="CHEBI:49883"/>
        <note>4Fe-4S-S-AdoMet</note>
    </ligand>
</feature>
<feature type="binding site" evidence="1">
    <location>
        <position position="121"/>
    </location>
    <ligand>
        <name>[2Fe-2S] cluster</name>
        <dbReference type="ChEBI" id="CHEBI:190135"/>
    </ligand>
</feature>
<feature type="binding site" evidence="1">
    <location>
        <position position="152"/>
    </location>
    <ligand>
        <name>[2Fe-2S] cluster</name>
        <dbReference type="ChEBI" id="CHEBI:190135"/>
    </ligand>
</feature>
<feature type="binding site" evidence="1">
    <location>
        <position position="212"/>
    </location>
    <ligand>
        <name>[2Fe-2S] cluster</name>
        <dbReference type="ChEBI" id="CHEBI:190135"/>
    </ligand>
</feature>
<feature type="binding site" evidence="1">
    <location>
        <position position="284"/>
    </location>
    <ligand>
        <name>[2Fe-2S] cluster</name>
        <dbReference type="ChEBI" id="CHEBI:190135"/>
    </ligand>
</feature>
<proteinExistence type="inferred from homology"/>
<comment type="function">
    <text evidence="1">Catalyzes the conversion of dethiobiotin (DTB) to biotin by the insertion of a sulfur atom into dethiobiotin via a radical-based mechanism.</text>
</comment>
<comment type="catalytic activity">
    <reaction evidence="1">
        <text>(4R,5S)-dethiobiotin + (sulfur carrier)-SH + 2 reduced [2Fe-2S]-[ferredoxin] + 2 S-adenosyl-L-methionine = (sulfur carrier)-H + biotin + 2 5'-deoxyadenosine + 2 L-methionine + 2 oxidized [2Fe-2S]-[ferredoxin]</text>
        <dbReference type="Rhea" id="RHEA:22060"/>
        <dbReference type="Rhea" id="RHEA-COMP:10000"/>
        <dbReference type="Rhea" id="RHEA-COMP:10001"/>
        <dbReference type="Rhea" id="RHEA-COMP:14737"/>
        <dbReference type="Rhea" id="RHEA-COMP:14739"/>
        <dbReference type="ChEBI" id="CHEBI:17319"/>
        <dbReference type="ChEBI" id="CHEBI:29917"/>
        <dbReference type="ChEBI" id="CHEBI:33737"/>
        <dbReference type="ChEBI" id="CHEBI:33738"/>
        <dbReference type="ChEBI" id="CHEBI:57586"/>
        <dbReference type="ChEBI" id="CHEBI:57844"/>
        <dbReference type="ChEBI" id="CHEBI:59789"/>
        <dbReference type="ChEBI" id="CHEBI:64428"/>
        <dbReference type="ChEBI" id="CHEBI:149473"/>
        <dbReference type="EC" id="2.8.1.6"/>
    </reaction>
</comment>
<comment type="cofactor">
    <cofactor evidence="1">
        <name>[4Fe-4S] cluster</name>
        <dbReference type="ChEBI" id="CHEBI:49883"/>
    </cofactor>
    <text evidence="1">Binds 1 [4Fe-4S] cluster. The cluster is coordinated with 3 cysteines and an exchangeable S-adenosyl-L-methionine.</text>
</comment>
<comment type="cofactor">
    <cofactor evidence="1">
        <name>[2Fe-2S] cluster</name>
        <dbReference type="ChEBI" id="CHEBI:190135"/>
    </cofactor>
    <text evidence="1">Binds 1 [2Fe-2S] cluster. The cluster is coordinated with 3 cysteines and 1 arginine.</text>
</comment>
<comment type="pathway">
    <text evidence="1">Cofactor biosynthesis; biotin biosynthesis; biotin from 7,8-diaminononanoate: step 2/2.</text>
</comment>
<comment type="subunit">
    <text evidence="1">Homodimer.</text>
</comment>
<comment type="similarity">
    <text evidence="1">Belongs to the radical SAM superfamily. Biotin synthase family.</text>
</comment>
<comment type="sequence caution" evidence="3">
    <conflict type="erroneous initiation">
        <sequence resource="EMBL-CDS" id="CAD86212"/>
    </conflict>
</comment>
<keyword id="KW-0001">2Fe-2S</keyword>
<keyword id="KW-0004">4Fe-4S</keyword>
<keyword id="KW-0093">Biotin biosynthesis</keyword>
<keyword id="KW-0408">Iron</keyword>
<keyword id="KW-0411">Iron-sulfur</keyword>
<keyword id="KW-0479">Metal-binding</keyword>
<keyword id="KW-1185">Reference proteome</keyword>
<keyword id="KW-0949">S-adenosyl-L-methionine</keyword>
<keyword id="KW-0808">Transferase</keyword>
<organism>
    <name type="scientific">Nitrosomonas europaea (strain ATCC 19718 / CIP 103999 / KCTC 2705 / NBRC 14298)</name>
    <dbReference type="NCBI Taxonomy" id="228410"/>
    <lineage>
        <taxon>Bacteria</taxon>
        <taxon>Pseudomonadati</taxon>
        <taxon>Pseudomonadota</taxon>
        <taxon>Betaproteobacteria</taxon>
        <taxon>Nitrosomonadales</taxon>
        <taxon>Nitrosomonadaceae</taxon>
        <taxon>Nitrosomonas</taxon>
    </lineage>
</organism>
<accession>Q82SL7</accession>
<protein>
    <recommendedName>
        <fullName evidence="1">Biotin synthase</fullName>
        <ecNumber evidence="1">2.8.1.6</ecNumber>
    </recommendedName>
</protein>
<gene>
    <name evidence="1" type="primary">bioB</name>
    <name type="ordered locus">NE2300</name>
</gene>
<dbReference type="EC" id="2.8.1.6" evidence="1"/>
<dbReference type="EMBL" id="AL954747">
    <property type="protein sequence ID" value="CAD86212.1"/>
    <property type="status" value="ALT_INIT"/>
    <property type="molecule type" value="Genomic_DNA"/>
</dbReference>
<dbReference type="RefSeq" id="WP_041356864.1">
    <property type="nucleotide sequence ID" value="NC_004757.1"/>
</dbReference>
<dbReference type="SMR" id="Q82SL7"/>
<dbReference type="STRING" id="228410.NE2300"/>
<dbReference type="GeneID" id="87105431"/>
<dbReference type="KEGG" id="neu:NE2300"/>
<dbReference type="eggNOG" id="COG0502">
    <property type="taxonomic scope" value="Bacteria"/>
</dbReference>
<dbReference type="HOGENOM" id="CLU_033172_1_2_4"/>
<dbReference type="OrthoDB" id="9786826at2"/>
<dbReference type="UniPathway" id="UPA00078">
    <property type="reaction ID" value="UER00162"/>
</dbReference>
<dbReference type="Proteomes" id="UP000001416">
    <property type="component" value="Chromosome"/>
</dbReference>
<dbReference type="GO" id="GO:0051537">
    <property type="term" value="F:2 iron, 2 sulfur cluster binding"/>
    <property type="evidence" value="ECO:0007669"/>
    <property type="project" value="UniProtKB-KW"/>
</dbReference>
<dbReference type="GO" id="GO:0051539">
    <property type="term" value="F:4 iron, 4 sulfur cluster binding"/>
    <property type="evidence" value="ECO:0007669"/>
    <property type="project" value="UniProtKB-KW"/>
</dbReference>
<dbReference type="GO" id="GO:0004076">
    <property type="term" value="F:biotin synthase activity"/>
    <property type="evidence" value="ECO:0007669"/>
    <property type="project" value="UniProtKB-UniRule"/>
</dbReference>
<dbReference type="GO" id="GO:0005506">
    <property type="term" value="F:iron ion binding"/>
    <property type="evidence" value="ECO:0007669"/>
    <property type="project" value="UniProtKB-UniRule"/>
</dbReference>
<dbReference type="GO" id="GO:0009102">
    <property type="term" value="P:biotin biosynthetic process"/>
    <property type="evidence" value="ECO:0007669"/>
    <property type="project" value="UniProtKB-UniRule"/>
</dbReference>
<dbReference type="CDD" id="cd01335">
    <property type="entry name" value="Radical_SAM"/>
    <property type="match status" value="1"/>
</dbReference>
<dbReference type="FunFam" id="3.20.20.70:FF:000011">
    <property type="entry name" value="Biotin synthase"/>
    <property type="match status" value="1"/>
</dbReference>
<dbReference type="Gene3D" id="3.20.20.70">
    <property type="entry name" value="Aldolase class I"/>
    <property type="match status" value="1"/>
</dbReference>
<dbReference type="HAMAP" id="MF_01694">
    <property type="entry name" value="BioB"/>
    <property type="match status" value="1"/>
</dbReference>
<dbReference type="InterPro" id="IPR013785">
    <property type="entry name" value="Aldolase_TIM"/>
</dbReference>
<dbReference type="InterPro" id="IPR010722">
    <property type="entry name" value="BATS_dom"/>
</dbReference>
<dbReference type="InterPro" id="IPR002684">
    <property type="entry name" value="Biotin_synth/BioAB"/>
</dbReference>
<dbReference type="InterPro" id="IPR024177">
    <property type="entry name" value="Biotin_synthase"/>
</dbReference>
<dbReference type="InterPro" id="IPR006638">
    <property type="entry name" value="Elp3/MiaA/NifB-like_rSAM"/>
</dbReference>
<dbReference type="InterPro" id="IPR007197">
    <property type="entry name" value="rSAM"/>
</dbReference>
<dbReference type="NCBIfam" id="TIGR00433">
    <property type="entry name" value="bioB"/>
    <property type="match status" value="1"/>
</dbReference>
<dbReference type="PANTHER" id="PTHR22976">
    <property type="entry name" value="BIOTIN SYNTHASE"/>
    <property type="match status" value="1"/>
</dbReference>
<dbReference type="PANTHER" id="PTHR22976:SF2">
    <property type="entry name" value="BIOTIN SYNTHASE, MITOCHONDRIAL"/>
    <property type="match status" value="1"/>
</dbReference>
<dbReference type="Pfam" id="PF06968">
    <property type="entry name" value="BATS"/>
    <property type="match status" value="1"/>
</dbReference>
<dbReference type="Pfam" id="PF04055">
    <property type="entry name" value="Radical_SAM"/>
    <property type="match status" value="1"/>
</dbReference>
<dbReference type="PIRSF" id="PIRSF001619">
    <property type="entry name" value="Biotin_synth"/>
    <property type="match status" value="1"/>
</dbReference>
<dbReference type="SFLD" id="SFLDF00272">
    <property type="entry name" value="biotin_synthase"/>
    <property type="match status" value="1"/>
</dbReference>
<dbReference type="SFLD" id="SFLDS00029">
    <property type="entry name" value="Radical_SAM"/>
    <property type="match status" value="1"/>
</dbReference>
<dbReference type="SMART" id="SM00876">
    <property type="entry name" value="BATS"/>
    <property type="match status" value="1"/>
</dbReference>
<dbReference type="SMART" id="SM00729">
    <property type="entry name" value="Elp3"/>
    <property type="match status" value="1"/>
</dbReference>
<dbReference type="SUPFAM" id="SSF102114">
    <property type="entry name" value="Radical SAM enzymes"/>
    <property type="match status" value="1"/>
</dbReference>
<dbReference type="PROSITE" id="PS51918">
    <property type="entry name" value="RADICAL_SAM"/>
    <property type="match status" value="1"/>
</dbReference>
<reference key="1">
    <citation type="journal article" date="2003" name="J. Bacteriol.">
        <title>Complete genome sequence of the ammonia-oxidizing bacterium and obligate chemolithoautotroph Nitrosomonas europaea.</title>
        <authorList>
            <person name="Chain P."/>
            <person name="Lamerdin J.E."/>
            <person name="Larimer F.W."/>
            <person name="Regala W."/>
            <person name="Lao V."/>
            <person name="Land M.L."/>
            <person name="Hauser L."/>
            <person name="Hooper A.B."/>
            <person name="Klotz M.G."/>
            <person name="Norton J."/>
            <person name="Sayavedra-Soto L.A."/>
            <person name="Arciero D.M."/>
            <person name="Hommes N.G."/>
            <person name="Whittaker M.M."/>
            <person name="Arp D.J."/>
        </authorList>
    </citation>
    <scope>NUCLEOTIDE SEQUENCE [LARGE SCALE GENOMIC DNA]</scope>
    <source>
        <strain>ATCC 19718 / CIP 103999 / KCTC 2705 / NBRC 14298</strain>
    </source>
</reference>
<sequence>MESATSLISEKQCECAHPNSDSAVQGSSLRWSIAAIESLLDLPFSDLIFQAQTVHRQYHDANAVQLSTLISVKTGGCSEDCAYCPQAARYHTGVENQAILSREEVVAAATQAKESGATRFCMGAAWRGPKQRDIEYMTEVISAVKALGMETCATLGILKPGQATQLKQAGLDYYNHNLDTAPEFYGEIITTREYQDRLDTLEEVRGANINVCCGGIVGLGESRMARAGLIAQLANLDPYPESVPINYLVQVEGTPLYGTPELDPFEFVRTIAAARITMPKAMVRLSAGRRQMPEAIQALCFLAGANSIFYGDKLLTTGNPDTEKDLALFEKLGLHAL</sequence>
<evidence type="ECO:0000255" key="1">
    <source>
        <dbReference type="HAMAP-Rule" id="MF_01694"/>
    </source>
</evidence>
<evidence type="ECO:0000255" key="2">
    <source>
        <dbReference type="PROSITE-ProRule" id="PRU01266"/>
    </source>
</evidence>
<evidence type="ECO:0000305" key="3"/>
<name>BIOB_NITEU</name>